<feature type="signal peptide" evidence="2">
    <location>
        <begin position="1"/>
        <end position="20"/>
    </location>
</feature>
<feature type="chain" id="PRO_0000002940" description="Laccase-2">
    <location>
        <begin position="21"/>
        <end position="519"/>
    </location>
</feature>
<feature type="domain" description="Plastocyanin-like 1">
    <location>
        <begin position="22"/>
        <end position="147"/>
    </location>
</feature>
<feature type="domain" description="Plastocyanin-like 2">
    <location>
        <begin position="159"/>
        <end position="301"/>
    </location>
</feature>
<feature type="domain" description="Plastocyanin-like 3">
    <location>
        <begin position="368"/>
        <end position="490"/>
    </location>
</feature>
<feature type="binding site" description="type 2 copper site" evidence="3 5">
    <location>
        <position position="84"/>
    </location>
    <ligand>
        <name>Cu cation</name>
        <dbReference type="ChEBI" id="CHEBI:23378"/>
        <label>1</label>
    </ligand>
</feature>
<feature type="binding site" description="type 3 copper site" evidence="3 5">
    <location>
        <position position="86"/>
    </location>
    <ligand>
        <name>Cu cation</name>
        <dbReference type="ChEBI" id="CHEBI:23378"/>
        <label>2</label>
    </ligand>
</feature>
<feature type="binding site" description="type 3 copper site" evidence="3 5">
    <location>
        <position position="129"/>
    </location>
    <ligand>
        <name>Cu cation</name>
        <dbReference type="ChEBI" id="CHEBI:23378"/>
        <label>2</label>
    </ligand>
</feature>
<feature type="binding site" description="type 3 copper site" evidence="3 5">
    <location>
        <position position="131"/>
    </location>
    <ligand>
        <name>Cu cation</name>
        <dbReference type="ChEBI" id="CHEBI:23378"/>
        <label>3</label>
    </ligand>
</feature>
<feature type="binding site" description="type 1 copper site" evidence="3 5">
    <location>
        <position position="415"/>
    </location>
    <ligand>
        <name>Cu cation</name>
        <dbReference type="ChEBI" id="CHEBI:23378"/>
        <label>4</label>
    </ligand>
</feature>
<feature type="binding site" description="type 2 copper site" evidence="3 5">
    <location>
        <position position="418"/>
    </location>
    <ligand>
        <name>Cu cation</name>
        <dbReference type="ChEBI" id="CHEBI:23378"/>
        <label>1</label>
    </ligand>
</feature>
<feature type="binding site" description="type 3 copper site" evidence="3 5">
    <location>
        <position position="420"/>
    </location>
    <ligand>
        <name>Cu cation</name>
        <dbReference type="ChEBI" id="CHEBI:23378"/>
        <label>3</label>
    </ligand>
</feature>
<feature type="binding site" description="type 3 copper site" evidence="3 5">
    <location>
        <position position="472"/>
    </location>
    <ligand>
        <name>Cu cation</name>
        <dbReference type="ChEBI" id="CHEBI:23378"/>
        <label>3</label>
    </ligand>
</feature>
<feature type="binding site" description="type 1 copper site" evidence="3 5">
    <location>
        <position position="473"/>
    </location>
    <ligand>
        <name>Cu cation</name>
        <dbReference type="ChEBI" id="CHEBI:23378"/>
        <label>4</label>
    </ligand>
</feature>
<feature type="binding site" description="type 3 copper site" evidence="3 5">
    <location>
        <position position="474"/>
    </location>
    <ligand>
        <name>Cu cation</name>
        <dbReference type="ChEBI" id="CHEBI:23378"/>
        <label>2</label>
    </ligand>
</feature>
<feature type="binding site" description="type 1 copper site" evidence="3 5">
    <location>
        <position position="478"/>
    </location>
    <ligand>
        <name>Cu cation</name>
        <dbReference type="ChEBI" id="CHEBI:23378"/>
        <label>4</label>
    </ligand>
</feature>
<feature type="glycosylation site" description="N-linked (GlcNAc...) asparagine" evidence="3 5">
    <location>
        <position position="74"/>
    </location>
</feature>
<feature type="glycosylation site" description="N-linked (GlcNAc...) asparagine" evidence="2">
    <location>
        <position position="161"/>
    </location>
</feature>
<feature type="glycosylation site" description="N-linked (GlcNAc...) asparagine" evidence="2">
    <location>
        <position position="228"/>
    </location>
</feature>
<feature type="glycosylation site" description="N-linked (GlcNAc...) asparagine" evidence="3 5">
    <location>
        <position position="237"/>
    </location>
</feature>
<feature type="glycosylation site" description="N-linked (GlcNAc...) asparagine" evidence="3 5">
    <location>
        <position position="271"/>
    </location>
</feature>
<feature type="glycosylation site" description="N-linked (GlcNAc...) asparagine" evidence="3 5">
    <location>
        <position position="353"/>
    </location>
</feature>
<feature type="glycosylation site" description="N-linked (GlcNAc...) asparagine" evidence="3 5">
    <location>
        <position position="361"/>
    </location>
</feature>
<feature type="glycosylation site" description="N-linked (GlcNAc...) asparagine" evidence="3 5">
    <location>
        <position position="456"/>
    </location>
</feature>
<feature type="disulfide bond" evidence="3 5">
    <location>
        <begin position="105"/>
        <end position="508"/>
    </location>
</feature>
<feature type="disulfide bond" evidence="3 5">
    <location>
        <begin position="137"/>
        <end position="225"/>
    </location>
</feature>
<feature type="sequence conflict" description="In Ref. 1; AAC49828." evidence="4" ref="1">
    <original>D</original>
    <variation>V</variation>
    <location>
        <position position="69"/>
    </location>
</feature>
<feature type="strand" evidence="6">
    <location>
        <begin position="24"/>
        <end position="35"/>
    </location>
</feature>
<feature type="strand" evidence="6">
    <location>
        <begin position="42"/>
        <end position="47"/>
    </location>
</feature>
<feature type="strand" evidence="6">
    <location>
        <begin position="50"/>
        <end position="52"/>
    </location>
</feature>
<feature type="strand" evidence="6">
    <location>
        <begin position="56"/>
        <end position="59"/>
    </location>
</feature>
<feature type="strand" evidence="6">
    <location>
        <begin position="63"/>
        <end position="70"/>
    </location>
</feature>
<feature type="helix" evidence="6">
    <location>
        <begin position="75"/>
        <end position="77"/>
    </location>
</feature>
<feature type="strand" evidence="6">
    <location>
        <begin position="83"/>
        <end position="86"/>
    </location>
</feature>
<feature type="helix" evidence="6">
    <location>
        <begin position="94"/>
        <end position="96"/>
    </location>
</feature>
<feature type="turn" evidence="6">
    <location>
        <begin position="100"/>
        <end position="102"/>
    </location>
</feature>
<feature type="strand" evidence="6">
    <location>
        <begin position="111"/>
        <end position="118"/>
    </location>
</feature>
<feature type="strand" evidence="6">
    <location>
        <begin position="124"/>
        <end position="130"/>
    </location>
</feature>
<feature type="helix" evidence="6">
    <location>
        <begin position="135"/>
        <end position="138"/>
    </location>
</feature>
<feature type="strand" evidence="6">
    <location>
        <begin position="141"/>
        <end position="147"/>
    </location>
</feature>
<feature type="helix" evidence="6">
    <location>
        <begin position="154"/>
        <end position="156"/>
    </location>
</feature>
<feature type="helix" evidence="6">
    <location>
        <begin position="162"/>
        <end position="164"/>
    </location>
</feature>
<feature type="strand" evidence="6">
    <location>
        <begin position="165"/>
        <end position="171"/>
    </location>
</feature>
<feature type="turn" evidence="6">
    <location>
        <begin position="176"/>
        <end position="178"/>
    </location>
</feature>
<feature type="strand" evidence="6">
    <location>
        <begin position="187"/>
        <end position="191"/>
    </location>
</feature>
<feature type="strand" evidence="6">
    <location>
        <begin position="207"/>
        <end position="210"/>
    </location>
</feature>
<feature type="strand" evidence="6">
    <location>
        <begin position="215"/>
        <end position="222"/>
    </location>
</feature>
<feature type="strand" evidence="6">
    <location>
        <begin position="229"/>
        <end position="233"/>
    </location>
</feature>
<feature type="strand" evidence="6">
    <location>
        <begin position="238"/>
        <end position="243"/>
    </location>
</feature>
<feature type="strand" evidence="6">
    <location>
        <begin position="246"/>
        <end position="258"/>
    </location>
</feature>
<feature type="strand" evidence="6">
    <location>
        <begin position="263"/>
        <end position="269"/>
    </location>
</feature>
<feature type="strand" evidence="6">
    <location>
        <begin position="274"/>
        <end position="287"/>
    </location>
</feature>
<feature type="helix" evidence="6">
    <location>
        <begin position="291"/>
        <end position="293"/>
    </location>
</feature>
<feature type="strand" evidence="6">
    <location>
        <begin position="296"/>
        <end position="301"/>
    </location>
</feature>
<feature type="strand" evidence="6">
    <location>
        <begin position="317"/>
        <end position="319"/>
    </location>
</feature>
<feature type="helix" evidence="6">
    <location>
        <begin position="322"/>
        <end position="324"/>
    </location>
</feature>
<feature type="strand" evidence="6">
    <location>
        <begin position="327"/>
        <end position="329"/>
    </location>
</feature>
<feature type="strand" evidence="6">
    <location>
        <begin position="342"/>
        <end position="347"/>
    </location>
</feature>
<feature type="strand" evidence="6">
    <location>
        <begin position="350"/>
        <end position="352"/>
    </location>
</feature>
<feature type="strand" evidence="6">
    <location>
        <begin position="357"/>
        <end position="359"/>
    </location>
</feature>
<feature type="helix" evidence="6">
    <location>
        <begin position="371"/>
        <end position="376"/>
    </location>
</feature>
<feature type="turn" evidence="6">
    <location>
        <begin position="382"/>
        <end position="384"/>
    </location>
</feature>
<feature type="strand" evidence="6">
    <location>
        <begin position="385"/>
        <end position="387"/>
    </location>
</feature>
<feature type="strand" evidence="6">
    <location>
        <begin position="390"/>
        <end position="394"/>
    </location>
</feature>
<feature type="strand" evidence="6">
    <location>
        <begin position="399"/>
        <end position="405"/>
    </location>
</feature>
<feature type="strand" evidence="6">
    <location>
        <begin position="416"/>
        <end position="419"/>
    </location>
</feature>
<feature type="strand" evidence="6">
    <location>
        <begin position="424"/>
        <end position="428"/>
    </location>
</feature>
<feature type="strand" evidence="6">
    <location>
        <begin position="437"/>
        <end position="439"/>
    </location>
</feature>
<feature type="strand" evidence="6">
    <location>
        <begin position="442"/>
        <end position="447"/>
    </location>
</feature>
<feature type="helix" evidence="6">
    <location>
        <begin position="451"/>
        <end position="453"/>
    </location>
</feature>
<feature type="strand" evidence="6">
    <location>
        <begin position="456"/>
        <end position="462"/>
    </location>
</feature>
<feature type="strand" evidence="6">
    <location>
        <begin position="467"/>
        <end position="475"/>
    </location>
</feature>
<feature type="helix" evidence="6">
    <location>
        <begin position="476"/>
        <end position="480"/>
    </location>
</feature>
<feature type="strand" evidence="6">
    <location>
        <begin position="484"/>
        <end position="489"/>
    </location>
</feature>
<feature type="helix" evidence="6">
    <location>
        <begin position="491"/>
        <end position="493"/>
    </location>
</feature>
<feature type="helix" evidence="6">
    <location>
        <begin position="494"/>
        <end position="497"/>
    </location>
</feature>
<feature type="helix" evidence="6">
    <location>
        <begin position="502"/>
        <end position="512"/>
    </location>
</feature>
<feature type="helix" evidence="6">
    <location>
        <begin position="516"/>
        <end position="518"/>
    </location>
</feature>
<reference key="1">
    <citation type="journal article" date="1997" name="Gene">
        <title>Cloning and sequence analysis of two laccase complementary DNAs from the ligninolytic basidiomycete Trametes versicolor.</title>
        <authorList>
            <person name="Ong E."/>
            <person name="Pollock W.B."/>
            <person name="Smith M."/>
        </authorList>
    </citation>
    <scope>NUCLEOTIDE SEQUENCE [MRNA]</scope>
    <source>
        <strain>ATCC 20869 / PAP 52 / 52J</strain>
    </source>
</reference>
<reference key="2">
    <citation type="journal article" date="2002" name="J. Biol. Chem.">
        <title>Crystal structure of a laccase from the fungus Trametes versicolor at 1.90-A resolution containing a full complement of coppers.</title>
        <authorList>
            <person name="Piontek K."/>
            <person name="Antorini M."/>
            <person name="Choinowski T."/>
        </authorList>
    </citation>
    <scope>X-RAY CRYSTALLOGRAPHY (1.9 ANGSTROMS) OF 21-519</scope>
    <scope>COFACTOR</scope>
    <scope>SUBCELLULAR LOCATION</scope>
    <scope>COPPER-BINDING SITES</scope>
    <scope>GLYCOSYLATION AT ASN-74; ASN-237; ASN-271; ASN-353; ASN-361 AND ASN-456</scope>
    <scope>DISULFIDE BONDS</scope>
</reference>
<comment type="function">
    <text evidence="1">Lignin degradation and detoxification of lignin-derived products.</text>
</comment>
<comment type="catalytic activity">
    <reaction evidence="1">
        <text>4 hydroquinone + O2 = 4 benzosemiquinone + 2 H2O</text>
        <dbReference type="Rhea" id="RHEA:11276"/>
        <dbReference type="ChEBI" id="CHEBI:15377"/>
        <dbReference type="ChEBI" id="CHEBI:15379"/>
        <dbReference type="ChEBI" id="CHEBI:17594"/>
        <dbReference type="ChEBI" id="CHEBI:17977"/>
        <dbReference type="EC" id="1.10.3.2"/>
    </reaction>
</comment>
<comment type="cofactor">
    <cofactor evidence="3">
        <name>Cu cation</name>
        <dbReference type="ChEBI" id="CHEBI:23378"/>
    </cofactor>
    <text evidence="3">Binds 4 Cu cations per monomer.</text>
</comment>
<comment type="subcellular location">
    <subcellularLocation>
        <location evidence="3">Secreted</location>
    </subcellularLocation>
</comment>
<comment type="similarity">
    <text evidence="4">Belongs to the multicopper oxidase family.</text>
</comment>
<proteinExistence type="evidence at protein level"/>
<dbReference type="EC" id="1.10.3.2" evidence="1"/>
<dbReference type="EMBL" id="U44851">
    <property type="protein sequence ID" value="AAA86659.1"/>
    <property type="molecule type" value="Genomic_DNA"/>
</dbReference>
<dbReference type="EMBL" id="U44430">
    <property type="protein sequence ID" value="AAC49828.1"/>
    <property type="molecule type" value="mRNA"/>
</dbReference>
<dbReference type="PDB" id="1GYC">
    <property type="method" value="X-ray"/>
    <property type="resolution" value="1.90 A"/>
    <property type="chains" value="A=21-519"/>
</dbReference>
<dbReference type="PDBsum" id="1GYC"/>
<dbReference type="SMR" id="Q12718"/>
<dbReference type="CAZy" id="AA1">
    <property type="family name" value="Auxiliary Activities 1"/>
</dbReference>
<dbReference type="GlyCosmos" id="Q12718">
    <property type="glycosylation" value="8 sites, No reported glycans"/>
</dbReference>
<dbReference type="iPTMnet" id="Q12718"/>
<dbReference type="BioCyc" id="MetaCyc:MONOMER-17211"/>
<dbReference type="BRENDA" id="1.10.3.2">
    <property type="organism ID" value="1626"/>
</dbReference>
<dbReference type="SABIO-RK" id="Q12718"/>
<dbReference type="EvolutionaryTrace" id="Q12718"/>
<dbReference type="GO" id="GO:0005576">
    <property type="term" value="C:extracellular region"/>
    <property type="evidence" value="ECO:0007669"/>
    <property type="project" value="UniProtKB-SubCell"/>
</dbReference>
<dbReference type="GO" id="GO:0005507">
    <property type="term" value="F:copper ion binding"/>
    <property type="evidence" value="ECO:0007669"/>
    <property type="project" value="InterPro"/>
</dbReference>
<dbReference type="GO" id="GO:0052716">
    <property type="term" value="F:hydroquinone:oxygen oxidoreductase activity"/>
    <property type="evidence" value="ECO:0007669"/>
    <property type="project" value="UniProtKB-EC"/>
</dbReference>
<dbReference type="GO" id="GO:0046274">
    <property type="term" value="P:lignin catabolic process"/>
    <property type="evidence" value="ECO:0007669"/>
    <property type="project" value="UniProtKB-KW"/>
</dbReference>
<dbReference type="CDD" id="cd13856">
    <property type="entry name" value="CuRO_1_Tv-LCC_like"/>
    <property type="match status" value="1"/>
</dbReference>
<dbReference type="CDD" id="cd13882">
    <property type="entry name" value="CuRO_2_Tv-LCC_like"/>
    <property type="match status" value="1"/>
</dbReference>
<dbReference type="CDD" id="cd13903">
    <property type="entry name" value="CuRO_3_Tv-LCC_like"/>
    <property type="match status" value="1"/>
</dbReference>
<dbReference type="FunFam" id="2.60.40.420:FF:000045">
    <property type="entry name" value="Laccase 2"/>
    <property type="match status" value="1"/>
</dbReference>
<dbReference type="FunFam" id="2.60.40.420:FF:000125">
    <property type="entry name" value="Laccase 2"/>
    <property type="match status" value="1"/>
</dbReference>
<dbReference type="FunFam" id="2.60.40.420:FF:000112">
    <property type="entry name" value="Laccase B"/>
    <property type="match status" value="1"/>
</dbReference>
<dbReference type="Gene3D" id="2.60.40.420">
    <property type="entry name" value="Cupredoxins - blue copper proteins"/>
    <property type="match status" value="3"/>
</dbReference>
<dbReference type="InterPro" id="IPR011707">
    <property type="entry name" value="Cu-oxidase-like_N"/>
</dbReference>
<dbReference type="InterPro" id="IPR001117">
    <property type="entry name" value="Cu-oxidase_2nd"/>
</dbReference>
<dbReference type="InterPro" id="IPR011706">
    <property type="entry name" value="Cu-oxidase_C"/>
</dbReference>
<dbReference type="InterPro" id="IPR045087">
    <property type="entry name" value="Cu-oxidase_fam"/>
</dbReference>
<dbReference type="InterPro" id="IPR033138">
    <property type="entry name" value="Cu_oxidase_CS"/>
</dbReference>
<dbReference type="InterPro" id="IPR008972">
    <property type="entry name" value="Cupredoxin"/>
</dbReference>
<dbReference type="PANTHER" id="PTHR11709:SF394">
    <property type="entry name" value="FI03373P-RELATED"/>
    <property type="match status" value="1"/>
</dbReference>
<dbReference type="PANTHER" id="PTHR11709">
    <property type="entry name" value="MULTI-COPPER OXIDASE"/>
    <property type="match status" value="1"/>
</dbReference>
<dbReference type="Pfam" id="PF00394">
    <property type="entry name" value="Cu-oxidase"/>
    <property type="match status" value="1"/>
</dbReference>
<dbReference type="Pfam" id="PF07731">
    <property type="entry name" value="Cu-oxidase_2"/>
    <property type="match status" value="1"/>
</dbReference>
<dbReference type="Pfam" id="PF07732">
    <property type="entry name" value="Cu-oxidase_3"/>
    <property type="match status" value="1"/>
</dbReference>
<dbReference type="SUPFAM" id="SSF49503">
    <property type="entry name" value="Cupredoxins"/>
    <property type="match status" value="3"/>
</dbReference>
<dbReference type="PROSITE" id="PS00079">
    <property type="entry name" value="MULTICOPPER_OXIDASE1"/>
    <property type="match status" value="1"/>
</dbReference>
<protein>
    <recommendedName>
        <fullName>Laccase-2</fullName>
        <ecNumber evidence="1">1.10.3.2</ecNumber>
    </recommendedName>
    <alternativeName>
        <fullName>Benzenediol:oxygen oxidoreductase 2</fullName>
    </alternativeName>
    <alternativeName>
        <fullName>Diphenol oxidase 2</fullName>
    </alternativeName>
    <alternativeName>
        <fullName>Laccase I</fullName>
    </alternativeName>
    <alternativeName>
        <fullName>Urishiol oxidase 2</fullName>
    </alternativeName>
</protein>
<accession>Q12718</accession>
<accession>Q12716</accession>
<organism>
    <name type="scientific">Trametes versicolor</name>
    <name type="common">White-rot fungus</name>
    <name type="synonym">Coriolus versicolor</name>
    <dbReference type="NCBI Taxonomy" id="5325"/>
    <lineage>
        <taxon>Eukaryota</taxon>
        <taxon>Fungi</taxon>
        <taxon>Dikarya</taxon>
        <taxon>Basidiomycota</taxon>
        <taxon>Agaricomycotina</taxon>
        <taxon>Agaricomycetes</taxon>
        <taxon>Polyporales</taxon>
        <taxon>Polyporaceae</taxon>
        <taxon>Trametes</taxon>
    </lineage>
</organism>
<keyword id="KW-0002">3D-structure</keyword>
<keyword id="KW-0186">Copper</keyword>
<keyword id="KW-1015">Disulfide bond</keyword>
<keyword id="KW-0325">Glycoprotein</keyword>
<keyword id="KW-0439">Lignin degradation</keyword>
<keyword id="KW-0479">Metal-binding</keyword>
<keyword id="KW-0560">Oxidoreductase</keyword>
<keyword id="KW-0677">Repeat</keyword>
<keyword id="KW-0964">Secreted</keyword>
<keyword id="KW-0732">Signal</keyword>
<gene>
    <name type="primary">LCC2</name>
    <name type="synonym">LCCI</name>
</gene>
<sequence>MGLQRFSFFVTLALVARSLAAIGPVASLVVANAPVSPDGFLRDAIVVNGVVPSPLITGKKGDRFQLNVDDTLTNHSMLKSTSIHWHGFFQAGTNWADGPAFVNQCPIASGHSFLYDFHVPDQAGTFWYHSHLSTQYCDGLRGPFVVYDPKDPHASRYDVDNESTVITLTDWYHTAARLGPRFPLGADATLINGLGRSASTPTAALAVINVQHGKRYRFRLVSISCDPNYTFSIDGHNLTVIEVDGINSQPLLVDSIQIFAAQRYSFVLNANQTVGNYWVRANPNFGTVGFAGGINSAILRYQGAPVAEPTTTQTTSVIPLIETNLHPLARMPVPGSPTPGGVDKALNLAFNFNGTNFFINNATFTPPTVPVLLQILSGAQTAQDLLPAGSVYPLPAHSTIEITLPATALAPGAPHPFHLHGHAFAVVRSAGSTTYNYNDPIFRDVVSTGTPAAGDNVTIRFQTDNPGPWFLHCHIDFHLDAGFAIVFAEDVADVKAANPVPKAWSDLCPIYDGLSEANQ</sequence>
<evidence type="ECO:0000250" key="1">
    <source>
        <dbReference type="UniProtKB" id="Q70KY3"/>
    </source>
</evidence>
<evidence type="ECO:0000255" key="2"/>
<evidence type="ECO:0000269" key="3">
    <source>
    </source>
</evidence>
<evidence type="ECO:0000305" key="4"/>
<evidence type="ECO:0007744" key="5">
    <source>
        <dbReference type="PDB" id="1GYC"/>
    </source>
</evidence>
<evidence type="ECO:0007829" key="6">
    <source>
        <dbReference type="PDB" id="1GYC"/>
    </source>
</evidence>
<name>LAC2_TRAVE</name>